<organism>
    <name type="scientific">Mus musculus</name>
    <name type="common">Mouse</name>
    <dbReference type="NCBI Taxonomy" id="10090"/>
    <lineage>
        <taxon>Eukaryota</taxon>
        <taxon>Metazoa</taxon>
        <taxon>Chordata</taxon>
        <taxon>Craniata</taxon>
        <taxon>Vertebrata</taxon>
        <taxon>Euteleostomi</taxon>
        <taxon>Mammalia</taxon>
        <taxon>Eutheria</taxon>
        <taxon>Euarchontoglires</taxon>
        <taxon>Glires</taxon>
        <taxon>Rodentia</taxon>
        <taxon>Myomorpha</taxon>
        <taxon>Muroidea</taxon>
        <taxon>Muridae</taxon>
        <taxon>Murinae</taxon>
        <taxon>Mus</taxon>
        <taxon>Mus</taxon>
    </lineage>
</organism>
<protein>
    <recommendedName>
        <fullName evidence="6">2-Hydroxyacid oxidase 1</fullName>
        <shortName>HAOX1</shortName>
        <ecNumber evidence="6">1.1.3.15</ecNumber>
    </recommendedName>
    <alternativeName>
        <fullName evidence="5">Glycolate oxidase</fullName>
        <shortName evidence="5">GOX</shortName>
    </alternativeName>
    <alternativeName>
        <fullName evidence="1">Glyoxylate oxidase</fullName>
        <ecNumber evidence="1">1.2.3.5</ecNumber>
    </alternativeName>
</protein>
<name>HAOX1_MOUSE</name>
<reference key="1">
    <citation type="journal article" date="1999" name="J. Biol. Chem.">
        <title>Molecular cloning of mouse glycolate oxidase. High evolutionary conservation and presence of an iron-responsive element-like sequence in the mRNA.</title>
        <authorList>
            <person name="Kohler S.A."/>
            <person name="Menotti E."/>
            <person name="Kuhn L.C."/>
        </authorList>
    </citation>
    <scope>NUCLEOTIDE SEQUENCE [MRNA]</scope>
    <scope>FUNCTION</scope>
    <scope>CATALYTIC ACTIVITY</scope>
    <scope>PATHWAY</scope>
    <scope>TISSUE SPECIFICITY</scope>
    <source>
        <tissue>Liver</tissue>
    </source>
</reference>
<reference key="2">
    <citation type="journal article" date="2007" name="Proc. Natl. Acad. Sci. U.S.A.">
        <title>Large-scale phosphorylation analysis of mouse liver.</title>
        <authorList>
            <person name="Villen J."/>
            <person name="Beausoleil S.A."/>
            <person name="Gerber S.A."/>
            <person name="Gygi S.P."/>
        </authorList>
    </citation>
    <scope>PHOSPHORYLATION [LARGE SCALE ANALYSIS] AT SER-194</scope>
    <scope>IDENTIFICATION BY MASS SPECTROMETRY [LARGE SCALE ANALYSIS]</scope>
    <source>
        <tissue>Liver</tissue>
    </source>
</reference>
<reference key="3">
    <citation type="journal article" date="2010" name="Cell">
        <title>A tissue-specific atlas of mouse protein phosphorylation and expression.</title>
        <authorList>
            <person name="Huttlin E.L."/>
            <person name="Jedrychowski M.P."/>
            <person name="Elias J.E."/>
            <person name="Goswami T."/>
            <person name="Rad R."/>
            <person name="Beausoleil S.A."/>
            <person name="Villen J."/>
            <person name="Haas W."/>
            <person name="Sowa M.E."/>
            <person name="Gygi S.P."/>
        </authorList>
    </citation>
    <scope>PHOSPHORYLATION [LARGE SCALE ANALYSIS] AT SER-194</scope>
    <scope>IDENTIFICATION BY MASS SPECTROMETRY [LARGE SCALE ANALYSIS]</scope>
    <source>
        <tissue>Liver</tissue>
    </source>
</reference>
<reference key="4">
    <citation type="journal article" date="2013" name="Mol. Cell">
        <title>SIRT5-mediated lysine desuccinylation impacts diverse metabolic pathways.</title>
        <authorList>
            <person name="Park J."/>
            <person name="Chen Y."/>
            <person name="Tishkoff D.X."/>
            <person name="Peng C."/>
            <person name="Tan M."/>
            <person name="Dai L."/>
            <person name="Xie Z."/>
            <person name="Zhang Y."/>
            <person name="Zwaans B.M."/>
            <person name="Skinner M.E."/>
            <person name="Lombard D.B."/>
            <person name="Zhao Y."/>
        </authorList>
    </citation>
    <scope>SUCCINYLATION [LARGE SCALE ANALYSIS] AT LYS-184</scope>
    <scope>IDENTIFICATION BY MASS SPECTROMETRY [LARGE SCALE ANALYSIS]</scope>
    <source>
        <tissue>Liver</tissue>
    </source>
</reference>
<comment type="function">
    <text evidence="1 4">Broad substrate specificity (S)-2-hydroxy-acid oxidase that preferentially oxidizes glycolate (PubMed:9891009). The glyoxylate produced by the oxidation of glycolate can then be utilized by alanine-glyoxylate aminotransferase for the peroxisomal synthesis of glycine; this pathway appears to be an important step for the detoxification of glyoxylate which, if allowed to accumulate, may be metabolized to oxalate with formation of kidney stones (By similarity). Can also catalyze the oxidation glyoxylate, and long chain hydroxyacids such as 2-hydroxyhexadecanoate and 2-hydroxyoctanoate (By similarity). Active in vitro with the artificial electron acceptor 2,6-dichlorophenolindophenol (DCIP), but O2 is believed to be the physiological electron acceptor, leading to the production of H2O2 (PubMed:9891009).</text>
</comment>
<comment type="catalytic activity">
    <reaction evidence="6">
        <text>a (2S)-2-hydroxycarboxylate + O2 = a 2-oxocarboxylate + H2O2</text>
        <dbReference type="Rhea" id="RHEA:16789"/>
        <dbReference type="ChEBI" id="CHEBI:15379"/>
        <dbReference type="ChEBI" id="CHEBI:16240"/>
        <dbReference type="ChEBI" id="CHEBI:35179"/>
        <dbReference type="ChEBI" id="CHEBI:58123"/>
        <dbReference type="EC" id="1.1.3.15"/>
    </reaction>
    <physiologicalReaction direction="left-to-right" evidence="6">
        <dbReference type="Rhea" id="RHEA:16790"/>
    </physiologicalReaction>
</comment>
<comment type="catalytic activity">
    <reaction evidence="6">
        <text>glycolate + O2 = glyoxylate + H2O2</text>
        <dbReference type="Rhea" id="RHEA:25311"/>
        <dbReference type="ChEBI" id="CHEBI:15379"/>
        <dbReference type="ChEBI" id="CHEBI:16240"/>
        <dbReference type="ChEBI" id="CHEBI:29805"/>
        <dbReference type="ChEBI" id="CHEBI:36655"/>
        <dbReference type="EC" id="1.1.3.15"/>
    </reaction>
    <physiologicalReaction direction="left-to-right" evidence="6">
        <dbReference type="Rhea" id="RHEA:25312"/>
    </physiologicalReaction>
</comment>
<comment type="catalytic activity">
    <reaction evidence="1">
        <text>glyoxylate + O2 + H2O = oxalate + H2O2 + H(+)</text>
        <dbReference type="Rhea" id="RHEA:14837"/>
        <dbReference type="ChEBI" id="CHEBI:15377"/>
        <dbReference type="ChEBI" id="CHEBI:15378"/>
        <dbReference type="ChEBI" id="CHEBI:15379"/>
        <dbReference type="ChEBI" id="CHEBI:16240"/>
        <dbReference type="ChEBI" id="CHEBI:30623"/>
        <dbReference type="ChEBI" id="CHEBI:36655"/>
        <dbReference type="EC" id="1.2.3.5"/>
    </reaction>
    <physiologicalReaction direction="left-to-right" evidence="1">
        <dbReference type="Rhea" id="RHEA:14838"/>
    </physiologicalReaction>
</comment>
<comment type="catalytic activity">
    <reaction evidence="1">
        <text>2-hydroxyhexadecanoate + O2 = 2-oxohexadecanoate + H2O2</text>
        <dbReference type="Rhea" id="RHEA:67944"/>
        <dbReference type="ChEBI" id="CHEBI:15379"/>
        <dbReference type="ChEBI" id="CHEBI:16240"/>
        <dbReference type="ChEBI" id="CHEBI:65097"/>
        <dbReference type="ChEBI" id="CHEBI:176593"/>
    </reaction>
    <physiologicalReaction direction="left-to-right" evidence="1">
        <dbReference type="Rhea" id="RHEA:67945"/>
    </physiologicalReaction>
</comment>
<comment type="catalytic activity">
    <reaction evidence="1">
        <text>2-hydroxyoctanoate + O2 = 2-oxooctanoate + H2O2</text>
        <dbReference type="Rhea" id="RHEA:67940"/>
        <dbReference type="ChEBI" id="CHEBI:15379"/>
        <dbReference type="ChEBI" id="CHEBI:16240"/>
        <dbReference type="ChEBI" id="CHEBI:133514"/>
        <dbReference type="ChEBI" id="CHEBI:176689"/>
    </reaction>
    <physiologicalReaction direction="left-to-right" evidence="1">
        <dbReference type="Rhea" id="RHEA:67941"/>
    </physiologicalReaction>
</comment>
<comment type="cofactor">
    <cofactor evidence="1">
        <name>FMN</name>
        <dbReference type="ChEBI" id="CHEBI:58210"/>
    </cofactor>
</comment>
<comment type="pathway">
    <text evidence="1">Amino-acid biosynthesis; glycine biosynthesis.</text>
</comment>
<comment type="subunit">
    <text evidence="1">Homotetramer.</text>
</comment>
<comment type="subcellular location">
    <subcellularLocation>
        <location evidence="1">Peroxisome matrix</location>
    </subcellularLocation>
</comment>
<comment type="tissue specificity">
    <text evidence="4">Liver.</text>
</comment>
<comment type="similarity">
    <text evidence="3">Belongs to the FMN-dependent alpha-hydroxy acid dehydrogenase family.</text>
</comment>
<gene>
    <name evidence="7" type="primary">Hao1</name>
</gene>
<evidence type="ECO:0000250" key="1">
    <source>
        <dbReference type="UniProtKB" id="Q9UJM8"/>
    </source>
</evidence>
<evidence type="ECO:0000255" key="2"/>
<evidence type="ECO:0000255" key="3">
    <source>
        <dbReference type="PROSITE-ProRule" id="PRU00683"/>
    </source>
</evidence>
<evidence type="ECO:0000269" key="4">
    <source>
    </source>
</evidence>
<evidence type="ECO:0000303" key="5">
    <source>
    </source>
</evidence>
<evidence type="ECO:0000305" key="6">
    <source>
    </source>
</evidence>
<evidence type="ECO:0000312" key="7">
    <source>
        <dbReference type="MGI" id="MGI:96011"/>
    </source>
</evidence>
<evidence type="ECO:0007744" key="8">
    <source>
    </source>
</evidence>
<evidence type="ECO:0007744" key="9">
    <source>
    </source>
</evidence>
<evidence type="ECO:0007744" key="10">
    <source>
    </source>
</evidence>
<sequence length="370" mass="41001">MLPRLVCISDYEQHVRSVLQKSVYDYYRSGANDQETLADNIQAFSRWKLYPRMLRNVADIDLSTSVLGQRVSMPICVGATAMQCMAHVDGELATVRACQTMGTGMMLSSWATSSIEEVAEAGPEALRWMQLYIYKDREISRQIVKRAEKQGYKAIFVTVDTPYLGNRIDDVRNRFKLPPQLRMKNFETNDLAFSPKGNFGDNSGLAEYVAQAIDPSLSWDDITWLRRLTSLPIVVKGILRGDDAKEAVKHGVDGILVSNHGARQLDGVPATIDVLPEIVEAVEGKVEVFLDGGVRKGTDVLKALALGAKAVFVGRPIIWGLAFQGEKGVQDVLEILKEEFRLAMALSGCQNVKVIDKTLVRKNPLAVSKI</sequence>
<dbReference type="EC" id="1.1.3.15" evidence="6"/>
<dbReference type="EC" id="1.2.3.5" evidence="1"/>
<dbReference type="EMBL" id="AF104312">
    <property type="protein sequence ID" value="AAD25332.1"/>
    <property type="molecule type" value="mRNA"/>
</dbReference>
<dbReference type="CCDS" id="CCDS16783.1"/>
<dbReference type="RefSeq" id="NP_034533.1">
    <property type="nucleotide sequence ID" value="NM_010403.2"/>
</dbReference>
<dbReference type="SMR" id="Q9WU19"/>
<dbReference type="BioGRID" id="200206">
    <property type="interactions" value="2"/>
</dbReference>
<dbReference type="FunCoup" id="Q9WU19">
    <property type="interactions" value="1139"/>
</dbReference>
<dbReference type="STRING" id="10090.ENSMUSP00000028704"/>
<dbReference type="BindingDB" id="Q9WU19"/>
<dbReference type="ChEMBL" id="CHEMBL4295985"/>
<dbReference type="DrugCentral" id="Q9WU19"/>
<dbReference type="GlyGen" id="Q9WU19">
    <property type="glycosylation" value="1 site, 1 O-linked glycan (1 site)"/>
</dbReference>
<dbReference type="iPTMnet" id="Q9WU19"/>
<dbReference type="PhosphoSitePlus" id="Q9WU19"/>
<dbReference type="SwissPalm" id="Q9WU19"/>
<dbReference type="jPOST" id="Q9WU19"/>
<dbReference type="PaxDb" id="10090-ENSMUSP00000028704"/>
<dbReference type="ProteomicsDB" id="269712"/>
<dbReference type="Antibodypedia" id="8448">
    <property type="antibodies" value="417 antibodies from 32 providers"/>
</dbReference>
<dbReference type="DNASU" id="15112"/>
<dbReference type="Ensembl" id="ENSMUST00000028704.3">
    <property type="protein sequence ID" value="ENSMUSP00000028704.3"/>
    <property type="gene ID" value="ENSMUSG00000027261.3"/>
</dbReference>
<dbReference type="GeneID" id="15112"/>
<dbReference type="KEGG" id="mmu:15112"/>
<dbReference type="UCSC" id="uc008mns.1">
    <property type="organism name" value="mouse"/>
</dbReference>
<dbReference type="AGR" id="MGI:96011"/>
<dbReference type="CTD" id="54363"/>
<dbReference type="MGI" id="MGI:96011">
    <property type="gene designation" value="Hao1"/>
</dbReference>
<dbReference type="VEuPathDB" id="HostDB:ENSMUSG00000027261"/>
<dbReference type="eggNOG" id="KOG0538">
    <property type="taxonomic scope" value="Eukaryota"/>
</dbReference>
<dbReference type="GeneTree" id="ENSGT00390000018717"/>
<dbReference type="HOGENOM" id="CLU_020639_6_1_1"/>
<dbReference type="InParanoid" id="Q9WU19"/>
<dbReference type="OMA" id="RIWFRPK"/>
<dbReference type="OrthoDB" id="25826at2759"/>
<dbReference type="PhylomeDB" id="Q9WU19"/>
<dbReference type="TreeFam" id="TF313363"/>
<dbReference type="BRENDA" id="1.1.3.15">
    <property type="organism ID" value="3474"/>
</dbReference>
<dbReference type="Reactome" id="R-MMU-389661">
    <property type="pathway name" value="Glyoxylate metabolism and glycine degradation"/>
</dbReference>
<dbReference type="Reactome" id="R-MMU-9033241">
    <property type="pathway name" value="Peroxisomal protein import"/>
</dbReference>
<dbReference type="UniPathway" id="UPA00288"/>
<dbReference type="BioGRID-ORCS" id="15112">
    <property type="hits" value="2 hits in 78 CRISPR screens"/>
</dbReference>
<dbReference type="ChiTaRS" id="Hao1">
    <property type="organism name" value="mouse"/>
</dbReference>
<dbReference type="PRO" id="PR:Q9WU19"/>
<dbReference type="Proteomes" id="UP000000589">
    <property type="component" value="Chromosome 2"/>
</dbReference>
<dbReference type="RNAct" id="Q9WU19">
    <property type="molecule type" value="protein"/>
</dbReference>
<dbReference type="Bgee" id="ENSMUSG00000027261">
    <property type="expression patterns" value="Expressed in left lobe of liver and 16 other cell types or tissues"/>
</dbReference>
<dbReference type="ExpressionAtlas" id="Q9WU19">
    <property type="expression patterns" value="baseline and differential"/>
</dbReference>
<dbReference type="GO" id="GO:0005782">
    <property type="term" value="C:peroxisomal matrix"/>
    <property type="evidence" value="ECO:0007669"/>
    <property type="project" value="UniProtKB-SubCell"/>
</dbReference>
<dbReference type="GO" id="GO:0005777">
    <property type="term" value="C:peroxisome"/>
    <property type="evidence" value="ECO:0000314"/>
    <property type="project" value="HGNC-UCL"/>
</dbReference>
<dbReference type="GO" id="GO:0003973">
    <property type="term" value="F:(S)-2-hydroxy-acid oxidase activity"/>
    <property type="evidence" value="ECO:0000314"/>
    <property type="project" value="MGI"/>
</dbReference>
<dbReference type="GO" id="GO:0010181">
    <property type="term" value="F:FMN binding"/>
    <property type="evidence" value="ECO:0000250"/>
    <property type="project" value="UniProtKB"/>
</dbReference>
<dbReference type="GO" id="GO:0047969">
    <property type="term" value="F:glyoxylate oxidase activity"/>
    <property type="evidence" value="ECO:0007669"/>
    <property type="project" value="Ensembl"/>
</dbReference>
<dbReference type="GO" id="GO:0001561">
    <property type="term" value="P:fatty acid alpha-oxidation"/>
    <property type="evidence" value="ECO:0000250"/>
    <property type="project" value="UniProtKB"/>
</dbReference>
<dbReference type="GO" id="GO:0006545">
    <property type="term" value="P:glycine biosynthetic process"/>
    <property type="evidence" value="ECO:0007669"/>
    <property type="project" value="UniProtKB-UniPathway"/>
</dbReference>
<dbReference type="GO" id="GO:0046296">
    <property type="term" value="P:glycolate catabolic process"/>
    <property type="evidence" value="ECO:0000250"/>
    <property type="project" value="UniProtKB"/>
</dbReference>
<dbReference type="GO" id="GO:0006979">
    <property type="term" value="P:response to oxidative stress"/>
    <property type="evidence" value="ECO:0007669"/>
    <property type="project" value="Ensembl"/>
</dbReference>
<dbReference type="CDD" id="cd02809">
    <property type="entry name" value="alpha_hydroxyacid_oxid_FMN"/>
    <property type="match status" value="1"/>
</dbReference>
<dbReference type="FunFam" id="3.20.20.70:FF:000056">
    <property type="entry name" value="hydroxyacid oxidase 2"/>
    <property type="match status" value="1"/>
</dbReference>
<dbReference type="Gene3D" id="3.20.20.70">
    <property type="entry name" value="Aldolase class I"/>
    <property type="match status" value="1"/>
</dbReference>
<dbReference type="InterPro" id="IPR013785">
    <property type="entry name" value="Aldolase_TIM"/>
</dbReference>
<dbReference type="InterPro" id="IPR012133">
    <property type="entry name" value="Alpha-hydoxy_acid_DH_FMN"/>
</dbReference>
<dbReference type="InterPro" id="IPR000262">
    <property type="entry name" value="FMN-dep_DH"/>
</dbReference>
<dbReference type="InterPro" id="IPR037396">
    <property type="entry name" value="FMN_HAD"/>
</dbReference>
<dbReference type="InterPro" id="IPR008259">
    <property type="entry name" value="FMN_hydac_DH_AS"/>
</dbReference>
<dbReference type="PANTHER" id="PTHR10578:SF107">
    <property type="entry name" value="2-HYDROXYACID OXIDASE 1"/>
    <property type="match status" value="1"/>
</dbReference>
<dbReference type="PANTHER" id="PTHR10578">
    <property type="entry name" value="S -2-HYDROXY-ACID OXIDASE-RELATED"/>
    <property type="match status" value="1"/>
</dbReference>
<dbReference type="Pfam" id="PF01070">
    <property type="entry name" value="FMN_dh"/>
    <property type="match status" value="1"/>
</dbReference>
<dbReference type="PIRSF" id="PIRSF000138">
    <property type="entry name" value="Al-hdrx_acd_dh"/>
    <property type="match status" value="1"/>
</dbReference>
<dbReference type="SUPFAM" id="SSF51395">
    <property type="entry name" value="FMN-linked oxidoreductases"/>
    <property type="match status" value="1"/>
</dbReference>
<dbReference type="PROSITE" id="PS00557">
    <property type="entry name" value="FMN_HYDROXY_ACID_DH_1"/>
    <property type="match status" value="1"/>
</dbReference>
<dbReference type="PROSITE" id="PS51349">
    <property type="entry name" value="FMN_HYDROXY_ACID_DH_2"/>
    <property type="match status" value="1"/>
</dbReference>
<proteinExistence type="evidence at protein level"/>
<accession>Q9WU19</accession>
<feature type="chain" id="PRO_0000206319" description="2-Hydroxyacid oxidase 1">
    <location>
        <begin position="1"/>
        <end position="370"/>
    </location>
</feature>
<feature type="domain" description="FMN hydroxy acid dehydrogenase" evidence="3">
    <location>
        <begin position="1"/>
        <end position="365"/>
    </location>
</feature>
<feature type="short sequence motif" description="Microbody targeting signal" evidence="2">
    <location>
        <begin position="368"/>
        <end position="370"/>
    </location>
</feature>
<feature type="active site" description="Proton acceptor" evidence="3">
    <location>
        <position position="260"/>
    </location>
</feature>
<feature type="binding site" evidence="1">
    <location>
        <position position="26"/>
    </location>
    <ligand>
        <name>glyoxylate</name>
        <dbReference type="ChEBI" id="CHEBI:36655"/>
    </ligand>
</feature>
<feature type="binding site" evidence="1">
    <location>
        <begin position="79"/>
        <end position="81"/>
    </location>
    <ligand>
        <name>FMN</name>
        <dbReference type="ChEBI" id="CHEBI:58210"/>
    </ligand>
</feature>
<feature type="binding site" evidence="1">
    <location>
        <position position="108"/>
    </location>
    <ligand>
        <name>FMN</name>
        <dbReference type="ChEBI" id="CHEBI:58210"/>
    </ligand>
</feature>
<feature type="binding site" evidence="1">
    <location>
        <position position="130"/>
    </location>
    <ligand>
        <name>FMN</name>
        <dbReference type="ChEBI" id="CHEBI:58210"/>
    </ligand>
</feature>
<feature type="binding site" evidence="1">
    <location>
        <position position="132"/>
    </location>
    <ligand>
        <name>glyoxylate</name>
        <dbReference type="ChEBI" id="CHEBI:36655"/>
    </ligand>
</feature>
<feature type="binding site" evidence="1">
    <location>
        <position position="158"/>
    </location>
    <ligand>
        <name>FMN</name>
        <dbReference type="ChEBI" id="CHEBI:58210"/>
    </ligand>
</feature>
<feature type="binding site" evidence="1">
    <location>
        <position position="167"/>
    </location>
    <ligand>
        <name>glyoxylate</name>
        <dbReference type="ChEBI" id="CHEBI:36655"/>
    </ligand>
</feature>
<feature type="binding site" evidence="1">
    <location>
        <position position="236"/>
    </location>
    <ligand>
        <name>FMN</name>
        <dbReference type="ChEBI" id="CHEBI:58210"/>
    </ligand>
</feature>
<feature type="binding site" evidence="1">
    <location>
        <position position="258"/>
    </location>
    <ligand>
        <name>FMN</name>
        <dbReference type="ChEBI" id="CHEBI:58210"/>
    </ligand>
</feature>
<feature type="binding site" evidence="1">
    <location>
        <position position="260"/>
    </location>
    <ligand>
        <name>glyoxylate</name>
        <dbReference type="ChEBI" id="CHEBI:36655"/>
    </ligand>
</feature>
<feature type="binding site" evidence="1">
    <location>
        <position position="263"/>
    </location>
    <ligand>
        <name>glyoxylate</name>
        <dbReference type="ChEBI" id="CHEBI:36655"/>
    </ligand>
</feature>
<feature type="binding site" evidence="1">
    <location>
        <begin position="291"/>
        <end position="295"/>
    </location>
    <ligand>
        <name>FMN</name>
        <dbReference type="ChEBI" id="CHEBI:58210"/>
    </ligand>
</feature>
<feature type="binding site" evidence="1">
    <location>
        <begin position="314"/>
        <end position="315"/>
    </location>
    <ligand>
        <name>FMN</name>
        <dbReference type="ChEBI" id="CHEBI:58210"/>
    </ligand>
</feature>
<feature type="modified residue" description="N6-succinyllysine" evidence="10">
    <location>
        <position position="184"/>
    </location>
</feature>
<feature type="modified residue" description="Phosphoserine" evidence="8 9">
    <location>
        <position position="194"/>
    </location>
</feature>
<feature type="modified residue" description="Phosphoserine" evidence="1">
    <location>
        <position position="230"/>
    </location>
</feature>
<keyword id="KW-0028">Amino-acid biosynthesis</keyword>
<keyword id="KW-0285">Flavoprotein</keyword>
<keyword id="KW-0288">FMN</keyword>
<keyword id="KW-0560">Oxidoreductase</keyword>
<keyword id="KW-0576">Peroxisome</keyword>
<keyword id="KW-0597">Phosphoprotein</keyword>
<keyword id="KW-1185">Reference proteome</keyword>